<gene>
    <name evidence="1" type="primary">psbB</name>
</gene>
<dbReference type="EMBL" id="AM711640">
    <property type="protein sequence ID" value="CAM98417.1"/>
    <property type="molecule type" value="Genomic_DNA"/>
</dbReference>
<dbReference type="RefSeq" id="YP_001430130.1">
    <property type="nucleotide sequence ID" value="NC_009766.1"/>
</dbReference>
<dbReference type="SMR" id="A7M989"/>
<dbReference type="GeneID" id="5536667"/>
<dbReference type="GO" id="GO:0009523">
    <property type="term" value="C:photosystem II"/>
    <property type="evidence" value="ECO:0007669"/>
    <property type="project" value="UniProtKB-KW"/>
</dbReference>
<dbReference type="GO" id="GO:0042170">
    <property type="term" value="C:plastid membrane"/>
    <property type="evidence" value="ECO:0007669"/>
    <property type="project" value="UniProtKB-SubCell"/>
</dbReference>
<dbReference type="GO" id="GO:0042651">
    <property type="term" value="C:thylakoid membrane"/>
    <property type="evidence" value="ECO:0007669"/>
    <property type="project" value="UniProtKB-UniRule"/>
</dbReference>
<dbReference type="GO" id="GO:0016168">
    <property type="term" value="F:chlorophyll binding"/>
    <property type="evidence" value="ECO:0007669"/>
    <property type="project" value="UniProtKB-UniRule"/>
</dbReference>
<dbReference type="GO" id="GO:0045156">
    <property type="term" value="F:electron transporter, transferring electrons within the cyclic electron transport pathway of photosynthesis activity"/>
    <property type="evidence" value="ECO:0007669"/>
    <property type="project" value="InterPro"/>
</dbReference>
<dbReference type="GO" id="GO:0009772">
    <property type="term" value="P:photosynthetic electron transport in photosystem II"/>
    <property type="evidence" value="ECO:0007669"/>
    <property type="project" value="InterPro"/>
</dbReference>
<dbReference type="FunFam" id="3.10.680.10:FF:000001">
    <property type="entry name" value="Photosystem II CP47 reaction center protein"/>
    <property type="match status" value="1"/>
</dbReference>
<dbReference type="Gene3D" id="3.10.680.10">
    <property type="entry name" value="Photosystem II CP47 reaction center protein"/>
    <property type="match status" value="1"/>
</dbReference>
<dbReference type="HAMAP" id="MF_01495">
    <property type="entry name" value="PSII_PsbB_CP47"/>
    <property type="match status" value="1"/>
</dbReference>
<dbReference type="InterPro" id="IPR000932">
    <property type="entry name" value="PS_antenna-like"/>
</dbReference>
<dbReference type="InterPro" id="IPR036001">
    <property type="entry name" value="PS_II_antenna-like_sf"/>
</dbReference>
<dbReference type="InterPro" id="IPR017486">
    <property type="entry name" value="PSII_PsbB"/>
</dbReference>
<dbReference type="NCBIfam" id="TIGR03039">
    <property type="entry name" value="PS_II_CP47"/>
    <property type="match status" value="1"/>
</dbReference>
<dbReference type="PANTHER" id="PTHR33180">
    <property type="entry name" value="PHOTOSYSTEM II CP43 REACTION CENTER PROTEIN"/>
    <property type="match status" value="1"/>
</dbReference>
<dbReference type="PANTHER" id="PTHR33180:SF37">
    <property type="entry name" value="PHOTOSYSTEM II CP43 REACTION CENTER PROTEIN"/>
    <property type="match status" value="1"/>
</dbReference>
<dbReference type="Pfam" id="PF00421">
    <property type="entry name" value="PSII"/>
    <property type="match status" value="1"/>
</dbReference>
<dbReference type="SUPFAM" id="SSF161077">
    <property type="entry name" value="Photosystem II antenna protein-like"/>
    <property type="match status" value="1"/>
</dbReference>
<sequence>MGLPWYRVHTVVLNDPGRLLSVHIMHTALVAGWAGSMALYELAVFDPSDPVLDPMWRQGMFVIPFMTRLGITNSWGGWGIAGGTVTNPGLWSYEGVAGAHIAFSGLCFLAAIWHWVYWDLEVFYDERTGKPSLDLPKIFGIHLFLSGVACFGFGAFHVTGLYGPGIWVSDPYGLTGKVQPIKPTWGAEGFDPFVPGGIASHHIAAGTLGILAGLFHLSVRPPQRLYKGLRMGNIETVLSSSIAAVFFAAFVVAGTMWYGSATTPIELFGPTRYQWDQGYFQQEIYRRVSAGLAENQSLSETWSKIPEKLAFYDYIGNNPAKGGLFRAGSMDNGDGIAVGWLGHPIFRDNEGRELFVRRMPTFFETFPIILVDGDGIVRADVPFRRAESKYSVEQVGVTVAFYGGELNGVSYSDPATVKKYARRAQLGEIFELDRATLKSDGVFRSSPRGWFTFGHASFALLFFFGHIWHGARTLFRDVFAGIDPDLDAQVEFGAFQKLGDPTTRRQGA</sequence>
<name>PSBB_CUSRE</name>
<evidence type="ECO:0000255" key="1">
    <source>
        <dbReference type="HAMAP-Rule" id="MF_01495"/>
    </source>
</evidence>
<evidence type="ECO:0000305" key="2"/>
<keyword id="KW-0148">Chlorophyll</keyword>
<keyword id="KW-0157">Chromophore</keyword>
<keyword id="KW-0472">Membrane</keyword>
<keyword id="KW-0602">Photosynthesis</keyword>
<keyword id="KW-0604">Photosystem II</keyword>
<keyword id="KW-0934">Plastid</keyword>
<keyword id="KW-0812">Transmembrane</keyword>
<keyword id="KW-1133">Transmembrane helix</keyword>
<geneLocation type="plastid"/>
<protein>
    <recommendedName>
        <fullName evidence="1">Photosystem II CP47 reaction center protein</fullName>
    </recommendedName>
    <alternativeName>
        <fullName evidence="1">PSII 47 kDa protein</fullName>
    </alternativeName>
    <alternativeName>
        <fullName evidence="1">Protein CP-47</fullName>
    </alternativeName>
</protein>
<feature type="chain" id="PRO_0000359816" description="Photosystem II CP47 reaction center protein">
    <location>
        <begin position="1"/>
        <end position="508"/>
    </location>
</feature>
<feature type="transmembrane region" description="Helical" evidence="1">
    <location>
        <begin position="21"/>
        <end position="36"/>
    </location>
</feature>
<feature type="transmembrane region" description="Helical" evidence="1">
    <location>
        <begin position="101"/>
        <end position="115"/>
    </location>
</feature>
<feature type="transmembrane region" description="Helical" evidence="1">
    <location>
        <begin position="140"/>
        <end position="156"/>
    </location>
</feature>
<feature type="transmembrane region" description="Helical" evidence="1">
    <location>
        <begin position="203"/>
        <end position="218"/>
    </location>
</feature>
<feature type="transmembrane region" description="Helical" evidence="1">
    <location>
        <begin position="237"/>
        <end position="252"/>
    </location>
</feature>
<feature type="transmembrane region" description="Helical" evidence="1">
    <location>
        <begin position="457"/>
        <end position="472"/>
    </location>
</feature>
<organism>
    <name type="scientific">Cuscuta reflexa</name>
    <name type="common">Southern Asian dodder</name>
    <dbReference type="NCBI Taxonomy" id="4129"/>
    <lineage>
        <taxon>Eukaryota</taxon>
        <taxon>Viridiplantae</taxon>
        <taxon>Streptophyta</taxon>
        <taxon>Embryophyta</taxon>
        <taxon>Tracheophyta</taxon>
        <taxon>Spermatophyta</taxon>
        <taxon>Magnoliopsida</taxon>
        <taxon>eudicotyledons</taxon>
        <taxon>Gunneridae</taxon>
        <taxon>Pentapetalae</taxon>
        <taxon>asterids</taxon>
        <taxon>lamiids</taxon>
        <taxon>Solanales</taxon>
        <taxon>Convolvulaceae</taxon>
        <taxon>Cuscuteae</taxon>
        <taxon>Cuscuta</taxon>
        <taxon>Cuscuta subgen. Monogynella</taxon>
    </lineage>
</organism>
<accession>A7M989</accession>
<proteinExistence type="inferred from homology"/>
<reference key="1">
    <citation type="journal article" date="2007" name="BMC Plant Biol.">
        <title>Complete DNA sequences of the plastid genomes of two parasitic flowering plant species, Cuscuta reflexa and Cuscuta gronovii.</title>
        <authorList>
            <person name="Funk H.T."/>
            <person name="Berg S."/>
            <person name="Krupinska K."/>
            <person name="Maier U.-G."/>
            <person name="Krause K."/>
        </authorList>
    </citation>
    <scope>NUCLEOTIDE SEQUENCE [LARGE SCALE GENOMIC DNA]</scope>
</reference>
<comment type="function">
    <text evidence="1">One of the components of the core complex of photosystem II (PSII). It binds chlorophyll and helps catalyze the primary light-induced photochemical processes of PSII. PSII is a light-driven water:plastoquinone oxidoreductase, using light energy to abstract electrons from H(2)O, generating O(2) and a proton gradient subsequently used for ATP formation.</text>
</comment>
<comment type="cofactor">
    <text evidence="1">Binds multiple chlorophylls. PSII binds additional chlorophylls, carotenoids and specific lipids.</text>
</comment>
<comment type="subunit">
    <text evidence="1">PSII is composed of 1 copy each of membrane proteins PsbA, PsbB, PsbC, PsbD, PsbE, PsbF, PsbH, PsbI, PsbJ, PsbK, PsbL, PsbM, PsbT, PsbX, PsbY, PsbZ, Psb30/Ycf12, at least 3 peripheral proteins of the oxygen-evolving complex and a large number of cofactors. It forms dimeric complexes.</text>
</comment>
<comment type="subcellular location">
    <subcellularLocation>
        <location evidence="2">Plastid membrane</location>
        <topology evidence="2">Multi-pass membrane protein</topology>
    </subcellularLocation>
</comment>
<comment type="similarity">
    <text evidence="1">Belongs to the PsbB/PsbC family. PsbB subfamily.</text>
</comment>
<comment type="caution">
    <text evidence="2">Young tissue from this organism is photosynthetic and contains some thylakoids, although the photosynthetic activity does not exceed the light compensation point.</text>
</comment>